<organism evidence="8">
    <name type="scientific">Mus musculus</name>
    <name type="common">Mouse</name>
    <dbReference type="NCBI Taxonomy" id="10090"/>
    <lineage>
        <taxon>Eukaryota</taxon>
        <taxon>Metazoa</taxon>
        <taxon>Chordata</taxon>
        <taxon>Craniata</taxon>
        <taxon>Vertebrata</taxon>
        <taxon>Euteleostomi</taxon>
        <taxon>Mammalia</taxon>
        <taxon>Eutheria</taxon>
        <taxon>Euarchontoglires</taxon>
        <taxon>Glires</taxon>
        <taxon>Rodentia</taxon>
        <taxon>Myomorpha</taxon>
        <taxon>Muroidea</taxon>
        <taxon>Muridae</taxon>
        <taxon>Murinae</taxon>
        <taxon>Mus</taxon>
        <taxon>Mus</taxon>
    </lineage>
</organism>
<feature type="chain" id="PRO_0000438396" description="Signal peptidase complex subunit 3">
    <location>
        <begin position="1"/>
        <end position="180"/>
    </location>
</feature>
<feature type="topological domain" description="Cytoplasmic" evidence="1">
    <location>
        <begin position="1"/>
        <end position="11"/>
    </location>
</feature>
<feature type="transmembrane region" description="Helical; Signal-anchor for type II membrane protein" evidence="4">
    <location>
        <begin position="12"/>
        <end position="32"/>
    </location>
</feature>
<feature type="topological domain" description="Lumenal" evidence="1">
    <location>
        <begin position="33"/>
        <end position="180"/>
    </location>
</feature>
<feature type="glycosylation site" description="N-linked (GlcNAc...) asparagine" evidence="4">
    <location>
        <position position="141"/>
    </location>
</feature>
<feature type="sequence conflict" description="In Ref. 1; BAC25873." evidence="5" ref="1">
    <original>S</original>
    <variation>G</variation>
    <location>
        <position position="17"/>
    </location>
</feature>
<gene>
    <name evidence="9" type="primary">Spcs3</name>
</gene>
<comment type="function">
    <text evidence="2 3">Essential component of the signal peptidase complex (SPC) which catalyzes the cleavage of N-terminal signal sequences from nascent proteins as they are translocated into the lumen of the endoplasmic reticulum (By similarity). Essential for the SPC catalytic activity, possibly by stabilizing and positioning the active center of the complex close to the lumenal surface (By similarity).</text>
</comment>
<comment type="subunit">
    <text evidence="2">Component of the signal peptidase complex paralog A (SPC-A) composed of a catalytic subunit SEC11A and three accessory subunits SPCS1, SPCS2 and SPCS3. Component of the signal peptidase complex paralog C (SPC-C) composed of a catalytic subunit SEC11C and three accessory subunits SPCS1, SPCS2 and SPCS3. Within the complex, interacts with SEC11A or SEC11C and SPCS1. The complex induces a local thinning of the ER membrane which is used to measure the length of the signal peptide (SP) h-region of protein substrates. This ensures the selectivity of the complex towards h-regions shorter than 18-20 amino acids.</text>
</comment>
<comment type="subcellular location">
    <subcellularLocation>
        <location evidence="1">Endoplasmic reticulum membrane</location>
        <topology evidence="1">Single-pass type II membrane protein</topology>
    </subcellularLocation>
</comment>
<comment type="similarity">
    <text evidence="5">Belongs to the SPCS3 family.</text>
</comment>
<name>SPCS3_MOUSE</name>
<protein>
    <recommendedName>
        <fullName evidence="9">Signal peptidase complex subunit 3</fullName>
    </recommendedName>
    <alternativeName>
        <fullName evidence="5">Microsomal signal peptidase 22/23 kDa subunit</fullName>
        <shortName evidence="5">SPC22/23</shortName>
        <shortName evidence="5">SPase 22/23 kDa subunit</shortName>
    </alternativeName>
</protein>
<sequence>MNTVLSRANSLFAFSLSVMAALTFGCFITTAFKDRSVPVRLHVSRIMLKNVEDFTGPRERSDLGFITFDITADLENIFDWNVKQLFLYLSAEYSTKNNALNQVVLWDKIVLRGDNPKLLLKDMKTKYFFFDDGNGLKGNRNVTLTLSWNVVPNAGILPLVTGSGHVSVPFPDTYEITKSY</sequence>
<evidence type="ECO:0000250" key="1">
    <source>
        <dbReference type="UniProtKB" id="P61008"/>
    </source>
</evidence>
<evidence type="ECO:0000250" key="2">
    <source>
        <dbReference type="UniProtKB" id="P61009"/>
    </source>
</evidence>
<evidence type="ECO:0000250" key="3">
    <source>
        <dbReference type="UniProtKB" id="Q12133"/>
    </source>
</evidence>
<evidence type="ECO:0000255" key="4"/>
<evidence type="ECO:0000305" key="5"/>
<evidence type="ECO:0000312" key="6">
    <source>
        <dbReference type="EMBL" id="AAH54817.1"/>
    </source>
</evidence>
<evidence type="ECO:0000312" key="7">
    <source>
        <dbReference type="EMBL" id="BAB25035.1"/>
    </source>
</evidence>
<evidence type="ECO:0000312" key="8">
    <source>
        <dbReference type="EMBL" id="BAC33224.1"/>
    </source>
</evidence>
<evidence type="ECO:0000312" key="9">
    <source>
        <dbReference type="MGI" id="MGI:1923937"/>
    </source>
</evidence>
<evidence type="ECO:0000312" key="10">
    <source>
        <dbReference type="Proteomes" id="UP000000589"/>
    </source>
</evidence>
<proteinExistence type="evidence at protein level"/>
<accession>Q6ZWQ7</accession>
<accession>Q8C1D0</accession>
<keyword id="KW-0256">Endoplasmic reticulum</keyword>
<keyword id="KW-0325">Glycoprotein</keyword>
<keyword id="KW-0472">Membrane</keyword>
<keyword id="KW-1185">Reference proteome</keyword>
<keyword id="KW-0735">Signal-anchor</keyword>
<keyword id="KW-0812">Transmembrane</keyword>
<keyword id="KW-1133">Transmembrane helix</keyword>
<dbReference type="EMBL" id="AK007432">
    <property type="protein sequence ID" value="BAB25035.1"/>
    <property type="molecule type" value="mRNA"/>
</dbReference>
<dbReference type="EMBL" id="AK028314">
    <property type="protein sequence ID" value="BAC25873.1"/>
    <property type="molecule type" value="mRNA"/>
</dbReference>
<dbReference type="EMBL" id="AK048051">
    <property type="protein sequence ID" value="BAC33224.1"/>
    <property type="molecule type" value="mRNA"/>
</dbReference>
<dbReference type="EMBL" id="AC102933">
    <property type="status" value="NOT_ANNOTATED_CDS"/>
    <property type="molecule type" value="Genomic_DNA"/>
</dbReference>
<dbReference type="EMBL" id="BC054817">
    <property type="protein sequence ID" value="AAH54817.1"/>
    <property type="molecule type" value="mRNA"/>
</dbReference>
<dbReference type="CCDS" id="CCDS57621.1"/>
<dbReference type="RefSeq" id="NP_083977.1">
    <property type="nucleotide sequence ID" value="NM_029701.1"/>
</dbReference>
<dbReference type="SMR" id="Q6ZWQ7"/>
<dbReference type="FunCoup" id="Q6ZWQ7">
    <property type="interactions" value="1880"/>
</dbReference>
<dbReference type="STRING" id="10090.ENSMUSP00000136527"/>
<dbReference type="GlyCosmos" id="Q6ZWQ7">
    <property type="glycosylation" value="1 site, No reported glycans"/>
</dbReference>
<dbReference type="GlyGen" id="Q6ZWQ7">
    <property type="glycosylation" value="1 site"/>
</dbReference>
<dbReference type="iPTMnet" id="Q6ZWQ7"/>
<dbReference type="PhosphoSitePlus" id="Q6ZWQ7"/>
<dbReference type="SwissPalm" id="Q6ZWQ7"/>
<dbReference type="jPOST" id="Q6ZWQ7"/>
<dbReference type="PaxDb" id="10090-ENSMUSP00000136527"/>
<dbReference type="PeptideAtlas" id="Q6ZWQ7"/>
<dbReference type="ProteomicsDB" id="257555"/>
<dbReference type="Pumba" id="Q6ZWQ7"/>
<dbReference type="DNASU" id="76687"/>
<dbReference type="Ensembl" id="ENSMUST00000067476.9">
    <property type="protein sequence ID" value="ENSMUSP00000136527.2"/>
    <property type="gene ID" value="ENSMUSG00000054408.10"/>
</dbReference>
<dbReference type="GeneID" id="76687"/>
<dbReference type="KEGG" id="mmu:76687"/>
<dbReference type="UCSC" id="uc033jfo.1">
    <property type="organism name" value="mouse"/>
</dbReference>
<dbReference type="AGR" id="MGI:1923937"/>
<dbReference type="CTD" id="60559"/>
<dbReference type="MGI" id="MGI:1923937">
    <property type="gene designation" value="Spcs3"/>
</dbReference>
<dbReference type="VEuPathDB" id="HostDB:ENSMUSG00000054408"/>
<dbReference type="eggNOG" id="KOG3372">
    <property type="taxonomic scope" value="Eukaryota"/>
</dbReference>
<dbReference type="GeneTree" id="ENSGT00390000009223"/>
<dbReference type="HOGENOM" id="CLU_068714_1_0_1"/>
<dbReference type="InParanoid" id="Q6ZWQ7"/>
<dbReference type="OMA" id="FWDDGHG"/>
<dbReference type="OrthoDB" id="10261524at2759"/>
<dbReference type="PhylomeDB" id="Q6ZWQ7"/>
<dbReference type="TreeFam" id="TF300185"/>
<dbReference type="Reactome" id="R-MMU-422085">
    <property type="pathway name" value="Synthesis, secretion, and deacylation of Ghrelin"/>
</dbReference>
<dbReference type="BioGRID-ORCS" id="76687">
    <property type="hits" value="20 hits in 78 CRISPR screens"/>
</dbReference>
<dbReference type="ChiTaRS" id="Spcs3">
    <property type="organism name" value="mouse"/>
</dbReference>
<dbReference type="PRO" id="PR:Q6ZWQ7"/>
<dbReference type="Proteomes" id="UP000000589">
    <property type="component" value="Chromosome 8"/>
</dbReference>
<dbReference type="RNAct" id="Q6ZWQ7">
    <property type="molecule type" value="protein"/>
</dbReference>
<dbReference type="Bgee" id="ENSMUSG00000054408">
    <property type="expression patterns" value="Expressed in lacrimal gland and 246 other cell types or tissues"/>
</dbReference>
<dbReference type="GO" id="GO:0005787">
    <property type="term" value="C:signal peptidase complex"/>
    <property type="evidence" value="ECO:0007669"/>
    <property type="project" value="InterPro"/>
</dbReference>
<dbReference type="GO" id="GO:0006465">
    <property type="term" value="P:signal peptide processing"/>
    <property type="evidence" value="ECO:0007669"/>
    <property type="project" value="InterPro"/>
</dbReference>
<dbReference type="InterPro" id="IPR007653">
    <property type="entry name" value="SPC3"/>
</dbReference>
<dbReference type="PANTHER" id="PTHR12804">
    <property type="entry name" value="MICROSOMAL SIGNAL PEPTIDASE 23 KD SUBUNIT SPC22/23"/>
    <property type="match status" value="1"/>
</dbReference>
<dbReference type="PANTHER" id="PTHR12804:SF0">
    <property type="entry name" value="SIGNAL PEPTIDASE COMPLEX SUBUNIT 3"/>
    <property type="match status" value="1"/>
</dbReference>
<dbReference type="Pfam" id="PF04573">
    <property type="entry name" value="SPC22"/>
    <property type="match status" value="1"/>
</dbReference>
<dbReference type="PIRSF" id="PIRSF016089">
    <property type="entry name" value="SPC22"/>
    <property type="match status" value="1"/>
</dbReference>
<reference evidence="7" key="1">
    <citation type="journal article" date="2005" name="Science">
        <title>The transcriptional landscape of the mammalian genome.</title>
        <authorList>
            <person name="Carninci P."/>
            <person name="Kasukawa T."/>
            <person name="Katayama S."/>
            <person name="Gough J."/>
            <person name="Frith M.C."/>
            <person name="Maeda N."/>
            <person name="Oyama R."/>
            <person name="Ravasi T."/>
            <person name="Lenhard B."/>
            <person name="Wells C."/>
            <person name="Kodzius R."/>
            <person name="Shimokawa K."/>
            <person name="Bajic V.B."/>
            <person name="Brenner S.E."/>
            <person name="Batalov S."/>
            <person name="Forrest A.R."/>
            <person name="Zavolan M."/>
            <person name="Davis M.J."/>
            <person name="Wilming L.G."/>
            <person name="Aidinis V."/>
            <person name="Allen J.E."/>
            <person name="Ambesi-Impiombato A."/>
            <person name="Apweiler R."/>
            <person name="Aturaliya R.N."/>
            <person name="Bailey T.L."/>
            <person name="Bansal M."/>
            <person name="Baxter L."/>
            <person name="Beisel K.W."/>
            <person name="Bersano T."/>
            <person name="Bono H."/>
            <person name="Chalk A.M."/>
            <person name="Chiu K.P."/>
            <person name="Choudhary V."/>
            <person name="Christoffels A."/>
            <person name="Clutterbuck D.R."/>
            <person name="Crowe M.L."/>
            <person name="Dalla E."/>
            <person name="Dalrymple B.P."/>
            <person name="de Bono B."/>
            <person name="Della Gatta G."/>
            <person name="di Bernardo D."/>
            <person name="Down T."/>
            <person name="Engstrom P."/>
            <person name="Fagiolini M."/>
            <person name="Faulkner G."/>
            <person name="Fletcher C.F."/>
            <person name="Fukushima T."/>
            <person name="Furuno M."/>
            <person name="Futaki S."/>
            <person name="Gariboldi M."/>
            <person name="Georgii-Hemming P."/>
            <person name="Gingeras T.R."/>
            <person name="Gojobori T."/>
            <person name="Green R.E."/>
            <person name="Gustincich S."/>
            <person name="Harbers M."/>
            <person name="Hayashi Y."/>
            <person name="Hensch T.K."/>
            <person name="Hirokawa N."/>
            <person name="Hill D."/>
            <person name="Huminiecki L."/>
            <person name="Iacono M."/>
            <person name="Ikeo K."/>
            <person name="Iwama A."/>
            <person name="Ishikawa T."/>
            <person name="Jakt M."/>
            <person name="Kanapin A."/>
            <person name="Katoh M."/>
            <person name="Kawasawa Y."/>
            <person name="Kelso J."/>
            <person name="Kitamura H."/>
            <person name="Kitano H."/>
            <person name="Kollias G."/>
            <person name="Krishnan S.P."/>
            <person name="Kruger A."/>
            <person name="Kummerfeld S.K."/>
            <person name="Kurochkin I.V."/>
            <person name="Lareau L.F."/>
            <person name="Lazarevic D."/>
            <person name="Lipovich L."/>
            <person name="Liu J."/>
            <person name="Liuni S."/>
            <person name="McWilliam S."/>
            <person name="Madan Babu M."/>
            <person name="Madera M."/>
            <person name="Marchionni L."/>
            <person name="Matsuda H."/>
            <person name="Matsuzawa S."/>
            <person name="Miki H."/>
            <person name="Mignone F."/>
            <person name="Miyake S."/>
            <person name="Morris K."/>
            <person name="Mottagui-Tabar S."/>
            <person name="Mulder N."/>
            <person name="Nakano N."/>
            <person name="Nakauchi H."/>
            <person name="Ng P."/>
            <person name="Nilsson R."/>
            <person name="Nishiguchi S."/>
            <person name="Nishikawa S."/>
            <person name="Nori F."/>
            <person name="Ohara O."/>
            <person name="Okazaki Y."/>
            <person name="Orlando V."/>
            <person name="Pang K.C."/>
            <person name="Pavan W.J."/>
            <person name="Pavesi G."/>
            <person name="Pesole G."/>
            <person name="Petrovsky N."/>
            <person name="Piazza S."/>
            <person name="Reed J."/>
            <person name="Reid J.F."/>
            <person name="Ring B.Z."/>
            <person name="Ringwald M."/>
            <person name="Rost B."/>
            <person name="Ruan Y."/>
            <person name="Salzberg S.L."/>
            <person name="Sandelin A."/>
            <person name="Schneider C."/>
            <person name="Schoenbach C."/>
            <person name="Sekiguchi K."/>
            <person name="Semple C.A."/>
            <person name="Seno S."/>
            <person name="Sessa L."/>
            <person name="Sheng Y."/>
            <person name="Shibata Y."/>
            <person name="Shimada H."/>
            <person name="Shimada K."/>
            <person name="Silva D."/>
            <person name="Sinclair B."/>
            <person name="Sperling S."/>
            <person name="Stupka E."/>
            <person name="Sugiura K."/>
            <person name="Sultana R."/>
            <person name="Takenaka Y."/>
            <person name="Taki K."/>
            <person name="Tammoja K."/>
            <person name="Tan S.L."/>
            <person name="Tang S."/>
            <person name="Taylor M.S."/>
            <person name="Tegner J."/>
            <person name="Teichmann S.A."/>
            <person name="Ueda H.R."/>
            <person name="van Nimwegen E."/>
            <person name="Verardo R."/>
            <person name="Wei C.L."/>
            <person name="Yagi K."/>
            <person name="Yamanishi H."/>
            <person name="Zabarovsky E."/>
            <person name="Zhu S."/>
            <person name="Zimmer A."/>
            <person name="Hide W."/>
            <person name="Bult C."/>
            <person name="Grimmond S.M."/>
            <person name="Teasdale R.D."/>
            <person name="Liu E.T."/>
            <person name="Brusic V."/>
            <person name="Quackenbush J."/>
            <person name="Wahlestedt C."/>
            <person name="Mattick J.S."/>
            <person name="Hume D.A."/>
            <person name="Kai C."/>
            <person name="Sasaki D."/>
            <person name="Tomaru Y."/>
            <person name="Fukuda S."/>
            <person name="Kanamori-Katayama M."/>
            <person name="Suzuki M."/>
            <person name="Aoki J."/>
            <person name="Arakawa T."/>
            <person name="Iida J."/>
            <person name="Imamura K."/>
            <person name="Itoh M."/>
            <person name="Kato T."/>
            <person name="Kawaji H."/>
            <person name="Kawagashira N."/>
            <person name="Kawashima T."/>
            <person name="Kojima M."/>
            <person name="Kondo S."/>
            <person name="Konno H."/>
            <person name="Nakano K."/>
            <person name="Ninomiya N."/>
            <person name="Nishio T."/>
            <person name="Okada M."/>
            <person name="Plessy C."/>
            <person name="Shibata K."/>
            <person name="Shiraki T."/>
            <person name="Suzuki S."/>
            <person name="Tagami M."/>
            <person name="Waki K."/>
            <person name="Watahiki A."/>
            <person name="Okamura-Oho Y."/>
            <person name="Suzuki H."/>
            <person name="Kawai J."/>
            <person name="Hayashizaki Y."/>
        </authorList>
    </citation>
    <scope>NUCLEOTIDE SEQUENCE [LARGE SCALE MRNA]</scope>
    <source>
        <strain evidence="8">C57BL/6J</strain>
        <tissue evidence="8">Brain</tissue>
        <tissue evidence="8">Head</tissue>
        <tissue evidence="7">Pancreas</tissue>
    </source>
</reference>
<reference evidence="10" key="2">
    <citation type="journal article" date="2009" name="PLoS Biol.">
        <title>Lineage-specific biology revealed by a finished genome assembly of the mouse.</title>
        <authorList>
            <person name="Church D.M."/>
            <person name="Goodstadt L."/>
            <person name="Hillier L.W."/>
            <person name="Zody M.C."/>
            <person name="Goldstein S."/>
            <person name="She X."/>
            <person name="Bult C.J."/>
            <person name="Agarwala R."/>
            <person name="Cherry J.L."/>
            <person name="DiCuccio M."/>
            <person name="Hlavina W."/>
            <person name="Kapustin Y."/>
            <person name="Meric P."/>
            <person name="Maglott D."/>
            <person name="Birtle Z."/>
            <person name="Marques A.C."/>
            <person name="Graves T."/>
            <person name="Zhou S."/>
            <person name="Teague B."/>
            <person name="Potamousis K."/>
            <person name="Churas C."/>
            <person name="Place M."/>
            <person name="Herschleb J."/>
            <person name="Runnheim R."/>
            <person name="Forrest D."/>
            <person name="Amos-Landgraf J."/>
            <person name="Schwartz D.C."/>
            <person name="Cheng Z."/>
            <person name="Lindblad-Toh K."/>
            <person name="Eichler E.E."/>
            <person name="Ponting C.P."/>
        </authorList>
    </citation>
    <scope>NUCLEOTIDE SEQUENCE [LARGE SCALE GENOMIC DNA]</scope>
    <source>
        <strain evidence="10">C57BL/6J</strain>
    </source>
</reference>
<reference evidence="6" key="3">
    <citation type="journal article" date="2004" name="Genome Res.">
        <title>The status, quality, and expansion of the NIH full-length cDNA project: the Mammalian Gene Collection (MGC).</title>
        <authorList>
            <consortium name="The MGC Project Team"/>
        </authorList>
    </citation>
    <scope>NUCLEOTIDE SEQUENCE [LARGE SCALE MRNA]</scope>
    <source>
        <strain evidence="6">FVB/N-3</strain>
        <tissue evidence="6">Mammary tumor</tissue>
    </source>
</reference>
<reference key="4">
    <citation type="journal article" date="2010" name="Cell">
        <title>A tissue-specific atlas of mouse protein phosphorylation and expression.</title>
        <authorList>
            <person name="Huttlin E.L."/>
            <person name="Jedrychowski M.P."/>
            <person name="Elias J.E."/>
            <person name="Goswami T."/>
            <person name="Rad R."/>
            <person name="Beausoleil S.A."/>
            <person name="Villen J."/>
            <person name="Haas W."/>
            <person name="Sowa M.E."/>
            <person name="Gygi S.P."/>
        </authorList>
    </citation>
    <scope>IDENTIFICATION BY MASS SPECTROMETRY [LARGE SCALE ANALYSIS]</scope>
    <source>
        <tissue>Brain</tissue>
        <tissue>Heart</tissue>
        <tissue>Kidney</tissue>
        <tissue>Liver</tissue>
        <tissue>Lung</tissue>
        <tissue>Pancreas</tissue>
        <tissue>Spleen</tissue>
        <tissue>Testis</tissue>
    </source>
</reference>